<reference key="1">
    <citation type="journal article" date="2003" name="Genome Res.">
        <title>Analysis of the gene-dense major histocompatibility complex class III region and its comparison to mouse.</title>
        <authorList>
            <person name="Xie T."/>
            <person name="Rowen L."/>
            <person name="Aguado B."/>
            <person name="Ahearn M.E."/>
            <person name="Madan A."/>
            <person name="Qin S."/>
            <person name="Campbell R.D."/>
            <person name="Hood L."/>
        </authorList>
    </citation>
    <scope>NUCLEOTIDE SEQUENCE [LARGE SCALE GENOMIC DNA]</scope>
    <source>
        <strain>129</strain>
    </source>
</reference>
<reference key="2">
    <citation type="journal article" date="2004" name="Genome Res.">
        <title>The status, quality, and expansion of the NIH full-length cDNA project: the Mammalian Gene Collection (MGC).</title>
        <authorList>
            <consortium name="The MGC Project Team"/>
        </authorList>
    </citation>
    <scope>NUCLEOTIDE SEQUENCE [LARGE SCALE MRNA]</scope>
    <source>
        <strain>FVB/N</strain>
        <tissue>Blastocyst</tissue>
        <tissue>Kidney</tissue>
    </source>
</reference>
<reference key="3">
    <citation type="journal article" date="2005" name="Science">
        <title>The transcriptional landscape of the mammalian genome.</title>
        <authorList>
            <person name="Carninci P."/>
            <person name="Kasukawa T."/>
            <person name="Katayama S."/>
            <person name="Gough J."/>
            <person name="Frith M.C."/>
            <person name="Maeda N."/>
            <person name="Oyama R."/>
            <person name="Ravasi T."/>
            <person name="Lenhard B."/>
            <person name="Wells C."/>
            <person name="Kodzius R."/>
            <person name="Shimokawa K."/>
            <person name="Bajic V.B."/>
            <person name="Brenner S.E."/>
            <person name="Batalov S."/>
            <person name="Forrest A.R."/>
            <person name="Zavolan M."/>
            <person name="Davis M.J."/>
            <person name="Wilming L.G."/>
            <person name="Aidinis V."/>
            <person name="Allen J.E."/>
            <person name="Ambesi-Impiombato A."/>
            <person name="Apweiler R."/>
            <person name="Aturaliya R.N."/>
            <person name="Bailey T.L."/>
            <person name="Bansal M."/>
            <person name="Baxter L."/>
            <person name="Beisel K.W."/>
            <person name="Bersano T."/>
            <person name="Bono H."/>
            <person name="Chalk A.M."/>
            <person name="Chiu K.P."/>
            <person name="Choudhary V."/>
            <person name="Christoffels A."/>
            <person name="Clutterbuck D.R."/>
            <person name="Crowe M.L."/>
            <person name="Dalla E."/>
            <person name="Dalrymple B.P."/>
            <person name="de Bono B."/>
            <person name="Della Gatta G."/>
            <person name="di Bernardo D."/>
            <person name="Down T."/>
            <person name="Engstrom P."/>
            <person name="Fagiolini M."/>
            <person name="Faulkner G."/>
            <person name="Fletcher C.F."/>
            <person name="Fukushima T."/>
            <person name="Furuno M."/>
            <person name="Futaki S."/>
            <person name="Gariboldi M."/>
            <person name="Georgii-Hemming P."/>
            <person name="Gingeras T.R."/>
            <person name="Gojobori T."/>
            <person name="Green R.E."/>
            <person name="Gustincich S."/>
            <person name="Harbers M."/>
            <person name="Hayashi Y."/>
            <person name="Hensch T.K."/>
            <person name="Hirokawa N."/>
            <person name="Hill D."/>
            <person name="Huminiecki L."/>
            <person name="Iacono M."/>
            <person name="Ikeo K."/>
            <person name="Iwama A."/>
            <person name="Ishikawa T."/>
            <person name="Jakt M."/>
            <person name="Kanapin A."/>
            <person name="Katoh M."/>
            <person name="Kawasawa Y."/>
            <person name="Kelso J."/>
            <person name="Kitamura H."/>
            <person name="Kitano H."/>
            <person name="Kollias G."/>
            <person name="Krishnan S.P."/>
            <person name="Kruger A."/>
            <person name="Kummerfeld S.K."/>
            <person name="Kurochkin I.V."/>
            <person name="Lareau L.F."/>
            <person name="Lazarevic D."/>
            <person name="Lipovich L."/>
            <person name="Liu J."/>
            <person name="Liuni S."/>
            <person name="McWilliam S."/>
            <person name="Madan Babu M."/>
            <person name="Madera M."/>
            <person name="Marchionni L."/>
            <person name="Matsuda H."/>
            <person name="Matsuzawa S."/>
            <person name="Miki H."/>
            <person name="Mignone F."/>
            <person name="Miyake S."/>
            <person name="Morris K."/>
            <person name="Mottagui-Tabar S."/>
            <person name="Mulder N."/>
            <person name="Nakano N."/>
            <person name="Nakauchi H."/>
            <person name="Ng P."/>
            <person name="Nilsson R."/>
            <person name="Nishiguchi S."/>
            <person name="Nishikawa S."/>
            <person name="Nori F."/>
            <person name="Ohara O."/>
            <person name="Okazaki Y."/>
            <person name="Orlando V."/>
            <person name="Pang K.C."/>
            <person name="Pavan W.J."/>
            <person name="Pavesi G."/>
            <person name="Pesole G."/>
            <person name="Petrovsky N."/>
            <person name="Piazza S."/>
            <person name="Reed J."/>
            <person name="Reid J.F."/>
            <person name="Ring B.Z."/>
            <person name="Ringwald M."/>
            <person name="Rost B."/>
            <person name="Ruan Y."/>
            <person name="Salzberg S.L."/>
            <person name="Sandelin A."/>
            <person name="Schneider C."/>
            <person name="Schoenbach C."/>
            <person name="Sekiguchi K."/>
            <person name="Semple C.A."/>
            <person name="Seno S."/>
            <person name="Sessa L."/>
            <person name="Sheng Y."/>
            <person name="Shibata Y."/>
            <person name="Shimada H."/>
            <person name="Shimada K."/>
            <person name="Silva D."/>
            <person name="Sinclair B."/>
            <person name="Sperling S."/>
            <person name="Stupka E."/>
            <person name="Sugiura K."/>
            <person name="Sultana R."/>
            <person name="Takenaka Y."/>
            <person name="Taki K."/>
            <person name="Tammoja K."/>
            <person name="Tan S.L."/>
            <person name="Tang S."/>
            <person name="Taylor M.S."/>
            <person name="Tegner J."/>
            <person name="Teichmann S.A."/>
            <person name="Ueda H.R."/>
            <person name="van Nimwegen E."/>
            <person name="Verardo R."/>
            <person name="Wei C.L."/>
            <person name="Yagi K."/>
            <person name="Yamanishi H."/>
            <person name="Zabarovsky E."/>
            <person name="Zhu S."/>
            <person name="Zimmer A."/>
            <person name="Hide W."/>
            <person name="Bult C."/>
            <person name="Grimmond S.M."/>
            <person name="Teasdale R.D."/>
            <person name="Liu E.T."/>
            <person name="Brusic V."/>
            <person name="Quackenbush J."/>
            <person name="Wahlestedt C."/>
            <person name="Mattick J.S."/>
            <person name="Hume D.A."/>
            <person name="Kai C."/>
            <person name="Sasaki D."/>
            <person name="Tomaru Y."/>
            <person name="Fukuda S."/>
            <person name="Kanamori-Katayama M."/>
            <person name="Suzuki M."/>
            <person name="Aoki J."/>
            <person name="Arakawa T."/>
            <person name="Iida J."/>
            <person name="Imamura K."/>
            <person name="Itoh M."/>
            <person name="Kato T."/>
            <person name="Kawaji H."/>
            <person name="Kawagashira N."/>
            <person name="Kawashima T."/>
            <person name="Kojima M."/>
            <person name="Kondo S."/>
            <person name="Konno H."/>
            <person name="Nakano K."/>
            <person name="Ninomiya N."/>
            <person name="Nishio T."/>
            <person name="Okada M."/>
            <person name="Plessy C."/>
            <person name="Shibata K."/>
            <person name="Shiraki T."/>
            <person name="Suzuki S."/>
            <person name="Tagami M."/>
            <person name="Waki K."/>
            <person name="Watahiki A."/>
            <person name="Okamura-Oho Y."/>
            <person name="Suzuki H."/>
            <person name="Kawai J."/>
            <person name="Hayashizaki Y."/>
        </authorList>
    </citation>
    <scope>NUCLEOTIDE SEQUENCE [LARGE SCALE MRNA] OF 340-707</scope>
    <source>
        <strain>C57BL/6J</strain>
        <tissue>Stomach</tissue>
    </source>
</reference>
<reference key="4">
    <citation type="journal article" date="2009" name="Nat. Biotechnol.">
        <title>Mass-spectrometric identification and relative quantification of N-linked cell surface glycoproteins.</title>
        <authorList>
            <person name="Wollscheid B."/>
            <person name="Bausch-Fluck D."/>
            <person name="Henderson C."/>
            <person name="O'Brien R."/>
            <person name="Bibel M."/>
            <person name="Schiess R."/>
            <person name="Aebersold R."/>
            <person name="Watts J.D."/>
        </authorList>
    </citation>
    <scope>GLYCOSYLATION [LARGE SCALE ANALYSIS] AT ASN-196</scope>
</reference>
<reference key="5">
    <citation type="journal article" date="2014" name="J. Biol. Chem.">
        <title>Molecular identification and functional characterization of the human colonic thiamine pyrophosphate transporter.</title>
        <authorList>
            <person name="Nabokina S.M."/>
            <person name="Inoue K."/>
            <person name="Subramanian V.S."/>
            <person name="Valle J.E."/>
            <person name="Yuasa H."/>
            <person name="Said H.M."/>
        </authorList>
    </citation>
    <scope>FUNCTION</scope>
    <scope>TISSUE SPECIFICITY</scope>
</reference>
<sequence>MGRKQNENEAHGNSAKYDPSFRGPIKNRGCTDIICCVLFLIFILGYIIVGLVAWVYGDPRQVLYPRNSTGAYCGVGDNKDKPYVLYFDILSCAAAINIISIAENGLQCPTPQVCVSSCPLAPWAVEVFQFSKTVGEVYGERRNFCLPAVSPDMIVEESLQKGLCPRFLLPSTPALGRCFPLPNINFTLPEDLRINNTTVSNGISGLLDSINARDVSVKIFEDFAQSWYWILVALGVALALSLLFILLLRLVAAPLVLLLIVGVLAVLAYGIYHCWQQYQVFRDKGASITQLGFTTNFSAYQSVKETWLAALIVLAVLEGILLLMLIFLRQRIRIAIALLKEASRAVGQMMSTMFYPLVTFVLLVICIGYWAVTALYLATSGQPQYIYWASNTSTPGCENVPVNMTCDPMAPLNSSCPNLKCVFKGYSTTGLAQRSLFNLQIYGVLGLFWTVNWVLALGQCVLAGAFASFYWAFHKPRDIPTFPLSSAFIRTLRYHTGSLAFGALILSLVQIARVILEYIDHKLRGSQNPVARCIICCFKCCLWCLEKFIKFLNRNAYIMIAIYGKNFCVSAKNAFMLLMRNVLRVVVLDKVTDLLLFFGKLLVVGGVGVLSFFFFSGRIKGLGKDFENPNLNYYWLPIMTSIMGAYVIASGFFSVFGMCVDTLFLCFLEDLERNDGSQERPYYMPKALLKILGKKNEAPTGGKTRKK</sequence>
<organism>
    <name type="scientific">Mus musculus</name>
    <name type="common">Mouse</name>
    <dbReference type="NCBI Taxonomy" id="10090"/>
    <lineage>
        <taxon>Eukaryota</taxon>
        <taxon>Metazoa</taxon>
        <taxon>Chordata</taxon>
        <taxon>Craniata</taxon>
        <taxon>Vertebrata</taxon>
        <taxon>Euteleostomi</taxon>
        <taxon>Mammalia</taxon>
        <taxon>Eutheria</taxon>
        <taxon>Euarchontoglires</taxon>
        <taxon>Glires</taxon>
        <taxon>Rodentia</taxon>
        <taxon>Myomorpha</taxon>
        <taxon>Muroidea</taxon>
        <taxon>Muridae</taxon>
        <taxon>Murinae</taxon>
        <taxon>Mus</taxon>
        <taxon>Mus</taxon>
    </lineage>
</organism>
<keyword id="KW-0050">Antiport</keyword>
<keyword id="KW-1003">Cell membrane</keyword>
<keyword id="KW-0325">Glycoprotein</keyword>
<keyword id="KW-0472">Membrane</keyword>
<keyword id="KW-1185">Reference proteome</keyword>
<keyword id="KW-0812">Transmembrane</keyword>
<keyword id="KW-1133">Transmembrane helix</keyword>
<keyword id="KW-0813">Transport</keyword>
<name>CTL4_MOUSE</name>
<comment type="function">
    <text evidence="1 2 5">Choline transporter that plays a role in the choline-acetylcholine system and is required to the efferent innervation of hair cells in the olivocochlear bundle for the maintenance of physiological function of outer hair cells and the protection of hair cells from acoustic injury (By similarity). Also described as a thiamine pyrophosphate transporter in colon, may mediate the absorption of microbiota-generated thiamine pyrophosphate and contribute to host thiamine (vitamin B1) homeostasis (PubMed:24379411).</text>
</comment>
<comment type="catalytic activity">
    <reaction evidence="1">
        <text>choline(out) + n H(+)(in) = choline(in) + n H(+)(out)</text>
        <dbReference type="Rhea" id="RHEA:75463"/>
        <dbReference type="ChEBI" id="CHEBI:15354"/>
        <dbReference type="ChEBI" id="CHEBI:15378"/>
    </reaction>
</comment>
<comment type="catalytic activity">
    <reaction evidence="1">
        <text>thiamine diphosphate(out) = thiamine diphosphate(in)</text>
        <dbReference type="Rhea" id="RHEA:75471"/>
        <dbReference type="ChEBI" id="CHEBI:58937"/>
    </reaction>
</comment>
<comment type="subcellular location">
    <subcellularLocation>
        <location evidence="1">Membrane</location>
        <topology evidence="1">Multi-pass membrane protein</topology>
    </subcellularLocation>
    <subcellularLocation>
        <location evidence="1">Apical cell membrane</location>
    </subcellularLocation>
</comment>
<comment type="tissue specificity">
    <text evidence="5">Expressed in colon and cecum.</text>
</comment>
<comment type="PTM">
    <text evidence="1">N-glycosylated; N-glycosylation of Asn-67 and Asn-391 is required for a proper thiamine pyrophosphate uptake.</text>
</comment>
<comment type="similarity">
    <text evidence="7">Belongs to the CTL (choline transporter-like) family.</text>
</comment>
<dbReference type="EMBL" id="AF109906">
    <property type="protein sequence ID" value="AAC84166.1"/>
    <property type="molecule type" value="Genomic_DNA"/>
</dbReference>
<dbReference type="EMBL" id="BC010808">
    <property type="protein sequence ID" value="AAH10808.1"/>
    <property type="molecule type" value="mRNA"/>
</dbReference>
<dbReference type="EMBL" id="BC052652">
    <property type="protein sequence ID" value="AAH52652.1"/>
    <property type="molecule type" value="mRNA"/>
</dbReference>
<dbReference type="EMBL" id="AK008864">
    <property type="protein sequence ID" value="BAB25938.1"/>
    <property type="molecule type" value="mRNA"/>
</dbReference>
<dbReference type="CCDS" id="CCDS37591.1"/>
<dbReference type="RefSeq" id="NP_076046.1">
    <property type="nucleotide sequence ID" value="NM_023557.3"/>
</dbReference>
<dbReference type="SMR" id="Q91VA1"/>
<dbReference type="FunCoup" id="Q91VA1">
    <property type="interactions" value="148"/>
</dbReference>
<dbReference type="STRING" id="10090.ENSMUSP00000007249"/>
<dbReference type="GlyCosmos" id="Q91VA1">
    <property type="glycosylation" value="8 sites, No reported glycans"/>
</dbReference>
<dbReference type="GlyGen" id="Q91VA1">
    <property type="glycosylation" value="10 sites, 3 N-linked glycans (4 sites)"/>
</dbReference>
<dbReference type="iPTMnet" id="Q91VA1"/>
<dbReference type="PhosphoSitePlus" id="Q91VA1"/>
<dbReference type="jPOST" id="Q91VA1"/>
<dbReference type="PaxDb" id="10090-ENSMUSP00000007249"/>
<dbReference type="ProteomicsDB" id="284055"/>
<dbReference type="Antibodypedia" id="71079">
    <property type="antibodies" value="56 antibodies from 12 providers"/>
</dbReference>
<dbReference type="DNASU" id="70129"/>
<dbReference type="Ensembl" id="ENSMUST00000007249.15">
    <property type="protein sequence ID" value="ENSMUSP00000007249.9"/>
    <property type="gene ID" value="ENSMUSG00000007034.16"/>
</dbReference>
<dbReference type="GeneID" id="70129"/>
<dbReference type="KEGG" id="mmu:70129"/>
<dbReference type="UCSC" id="uc008ceh.2">
    <property type="organism name" value="mouse"/>
</dbReference>
<dbReference type="AGR" id="MGI:1917379"/>
<dbReference type="CTD" id="80736"/>
<dbReference type="MGI" id="MGI:1917379">
    <property type="gene designation" value="Slc44a4"/>
</dbReference>
<dbReference type="VEuPathDB" id="HostDB:ENSMUSG00000007034"/>
<dbReference type="eggNOG" id="KOG1362">
    <property type="taxonomic scope" value="Eukaryota"/>
</dbReference>
<dbReference type="GeneTree" id="ENSGT00940000160576"/>
<dbReference type="HOGENOM" id="CLU_017181_3_1_1"/>
<dbReference type="InParanoid" id="Q91VA1"/>
<dbReference type="OMA" id="FISLMRW"/>
<dbReference type="OrthoDB" id="420519at2759"/>
<dbReference type="PhylomeDB" id="Q91VA1"/>
<dbReference type="TreeFam" id="TF313325"/>
<dbReference type="Reactome" id="R-MMU-1483191">
    <property type="pathway name" value="Synthesis of PC"/>
</dbReference>
<dbReference type="Reactome" id="R-MMU-425366">
    <property type="pathway name" value="Transport of bile salts and organic acids, metal ions and amine compounds"/>
</dbReference>
<dbReference type="BioGRID-ORCS" id="70129">
    <property type="hits" value="1 hit in 79 CRISPR screens"/>
</dbReference>
<dbReference type="ChiTaRS" id="Slc44a4">
    <property type="organism name" value="mouse"/>
</dbReference>
<dbReference type="PRO" id="PR:Q91VA1"/>
<dbReference type="Proteomes" id="UP000000589">
    <property type="component" value="Chromosome 17"/>
</dbReference>
<dbReference type="RNAct" id="Q91VA1">
    <property type="molecule type" value="protein"/>
</dbReference>
<dbReference type="Bgee" id="ENSMUSG00000007034">
    <property type="expression patterns" value="Expressed in left colon and 95 other cell types or tissues"/>
</dbReference>
<dbReference type="ExpressionAtlas" id="Q91VA1">
    <property type="expression patterns" value="baseline and differential"/>
</dbReference>
<dbReference type="GO" id="GO:0016324">
    <property type="term" value="C:apical plasma membrane"/>
    <property type="evidence" value="ECO:0000250"/>
    <property type="project" value="UniProtKB"/>
</dbReference>
<dbReference type="GO" id="GO:0015297">
    <property type="term" value="F:antiporter activity"/>
    <property type="evidence" value="ECO:0007669"/>
    <property type="project" value="UniProtKB-KW"/>
</dbReference>
<dbReference type="GO" id="GO:0015220">
    <property type="term" value="F:choline transmembrane transporter activity"/>
    <property type="evidence" value="ECO:0000250"/>
    <property type="project" value="UniProtKB"/>
</dbReference>
<dbReference type="GO" id="GO:0090422">
    <property type="term" value="F:thiamine pyrophosphate transmembrane transporter activity"/>
    <property type="evidence" value="ECO:0000314"/>
    <property type="project" value="UniProtKB"/>
</dbReference>
<dbReference type="GO" id="GO:0008292">
    <property type="term" value="P:acetylcholine biosynthetic process"/>
    <property type="evidence" value="ECO:0000250"/>
    <property type="project" value="UniProtKB"/>
</dbReference>
<dbReference type="GO" id="GO:0061526">
    <property type="term" value="P:acetylcholine secretion"/>
    <property type="evidence" value="ECO:0000250"/>
    <property type="project" value="UniProtKB"/>
</dbReference>
<dbReference type="GO" id="GO:0015871">
    <property type="term" value="P:choline transport"/>
    <property type="evidence" value="ECO:0000250"/>
    <property type="project" value="UniProtKB"/>
</dbReference>
<dbReference type="GO" id="GO:0035675">
    <property type="term" value="P:neuromast hair cell development"/>
    <property type="evidence" value="ECO:0000250"/>
    <property type="project" value="UniProtKB"/>
</dbReference>
<dbReference type="GO" id="GO:0032475">
    <property type="term" value="P:otolith formation"/>
    <property type="evidence" value="ECO:0000250"/>
    <property type="project" value="UniProtKB"/>
</dbReference>
<dbReference type="GO" id="GO:0030307">
    <property type="term" value="P:positive regulation of cell growth"/>
    <property type="evidence" value="ECO:0000250"/>
    <property type="project" value="UniProtKB"/>
</dbReference>
<dbReference type="GO" id="GO:0030974">
    <property type="term" value="P:thiamine pyrophosphate transmembrane transport"/>
    <property type="evidence" value="ECO:0000314"/>
    <property type="project" value="UniProtKB"/>
</dbReference>
<dbReference type="InterPro" id="IPR007603">
    <property type="entry name" value="Choline_transptr-like"/>
</dbReference>
<dbReference type="PANTHER" id="PTHR12385">
    <property type="entry name" value="CHOLINE TRANSPORTER-LIKE (SLC FAMILY 44)"/>
    <property type="match status" value="1"/>
</dbReference>
<dbReference type="PANTHER" id="PTHR12385:SF37">
    <property type="entry name" value="CHOLINE TRANSPORTER-LIKE PROTEIN 4"/>
    <property type="match status" value="1"/>
</dbReference>
<dbReference type="Pfam" id="PF04515">
    <property type="entry name" value="Choline_transpo"/>
    <property type="match status" value="1"/>
</dbReference>
<gene>
    <name evidence="8" type="primary">Slc44a4</name>
    <name evidence="7" type="synonym">Ctl4</name>
    <name type="synonym">Ng22</name>
    <name evidence="6" type="synonym">TPPT1</name>
</gene>
<proteinExistence type="evidence at protein level"/>
<protein>
    <recommendedName>
        <fullName evidence="7">Choline transporter-like protein 4</fullName>
    </recommendedName>
    <alternativeName>
        <fullName evidence="8">Solute carrier family 44 member 4</fullName>
    </alternativeName>
    <alternativeName>
        <fullName evidence="6">Thiamine pyrophosphate transporter 1</fullName>
        <shortName evidence="6">mTPPT1</shortName>
    </alternativeName>
</protein>
<feature type="chain" id="PRO_0000191724" description="Choline transporter-like protein 4">
    <location>
        <begin position="1"/>
        <end position="707"/>
    </location>
</feature>
<feature type="topological domain" description="Cytoplasmic" evidence="3">
    <location>
        <begin position="1"/>
        <end position="32"/>
    </location>
</feature>
<feature type="transmembrane region" description="Helical" evidence="3">
    <location>
        <begin position="33"/>
        <end position="53"/>
    </location>
</feature>
<feature type="topological domain" description="Extracellular" evidence="3">
    <location>
        <begin position="54"/>
        <end position="227"/>
    </location>
</feature>
<feature type="transmembrane region" description="Helical" evidence="3">
    <location>
        <begin position="228"/>
        <end position="248"/>
    </location>
</feature>
<feature type="topological domain" description="Cytoplasmic" evidence="3">
    <location>
        <begin position="249"/>
        <end position="250"/>
    </location>
</feature>
<feature type="transmembrane region" description="Helical" evidence="3">
    <location>
        <begin position="251"/>
        <end position="271"/>
    </location>
</feature>
<feature type="topological domain" description="Extracellular" evidence="3">
    <location>
        <begin position="272"/>
        <end position="307"/>
    </location>
</feature>
<feature type="transmembrane region" description="Helical" evidence="3">
    <location>
        <begin position="308"/>
        <end position="328"/>
    </location>
</feature>
<feature type="topological domain" description="Cytoplasmic" evidence="3">
    <location>
        <begin position="329"/>
        <end position="356"/>
    </location>
</feature>
<feature type="transmembrane region" description="Helical" evidence="3">
    <location>
        <begin position="357"/>
        <end position="377"/>
    </location>
</feature>
<feature type="topological domain" description="Extracellular" evidence="3">
    <location>
        <begin position="378"/>
        <end position="452"/>
    </location>
</feature>
<feature type="transmembrane region" description="Helical" evidence="3">
    <location>
        <begin position="453"/>
        <end position="473"/>
    </location>
</feature>
<feature type="topological domain" description="Cytoplasmic" evidence="3">
    <location>
        <begin position="474"/>
        <end position="498"/>
    </location>
</feature>
<feature type="transmembrane region" description="Helical" evidence="3">
    <location>
        <begin position="499"/>
        <end position="519"/>
    </location>
</feature>
<feature type="topological domain" description="Extracellular" evidence="3">
    <location>
        <begin position="520"/>
        <end position="557"/>
    </location>
</feature>
<feature type="transmembrane region" description="Helical" evidence="3">
    <location>
        <begin position="558"/>
        <end position="578"/>
    </location>
</feature>
<feature type="topological domain" description="Cytoplasmic" evidence="3">
    <location>
        <begin position="579"/>
        <end position="594"/>
    </location>
</feature>
<feature type="transmembrane region" description="Helical" evidence="3">
    <location>
        <begin position="595"/>
        <end position="615"/>
    </location>
</feature>
<feature type="topological domain" description="Extracellular" evidence="3">
    <location>
        <begin position="616"/>
        <end position="635"/>
    </location>
</feature>
<feature type="transmembrane region" description="Helical" evidence="3">
    <location>
        <begin position="636"/>
        <end position="656"/>
    </location>
</feature>
<feature type="topological domain" description="Cytoplasmic" evidence="3">
    <location>
        <begin position="657"/>
        <end position="707"/>
    </location>
</feature>
<feature type="glycosylation site" description="N-linked (GlcNAc...) asparagine" evidence="1">
    <location>
        <position position="67"/>
    </location>
</feature>
<feature type="glycosylation site" description="N-linked (GlcNAc...) asparagine" evidence="3">
    <location>
        <position position="185"/>
    </location>
</feature>
<feature type="glycosylation site" description="N-linked (GlcNAc...) asparagine" evidence="3">
    <location>
        <position position="195"/>
    </location>
</feature>
<feature type="glycosylation site" description="N-linked (GlcNAc...) asparagine" evidence="4">
    <location>
        <position position="196"/>
    </location>
</feature>
<feature type="glycosylation site" description="N-linked (GlcNAc...) asparagine" evidence="3">
    <location>
        <position position="296"/>
    </location>
</feature>
<feature type="glycosylation site" description="N-linked (GlcNAc...) asparagine" evidence="1">
    <location>
        <position position="391"/>
    </location>
</feature>
<feature type="glycosylation site" description="N-linked (GlcNAc...) asparagine" evidence="3">
    <location>
        <position position="403"/>
    </location>
</feature>
<feature type="glycosylation site" description="N-linked (GlcNAc...) asparagine" evidence="1">
    <location>
        <position position="413"/>
    </location>
</feature>
<feature type="sequence conflict" description="In Ref. 2; AAH10808." evidence="7" ref="2">
    <original>V</original>
    <variation>A</variation>
    <location>
        <position position="461"/>
    </location>
</feature>
<accession>Q91VA1</accession>
<accession>Q7TQ02</accession>
<accession>Q9CVA7</accession>
<evidence type="ECO:0000250" key="1">
    <source>
        <dbReference type="UniProtKB" id="Q53GD3"/>
    </source>
</evidence>
<evidence type="ECO:0000250" key="2">
    <source>
        <dbReference type="UniProtKB" id="Q7T2B0"/>
    </source>
</evidence>
<evidence type="ECO:0000255" key="3"/>
<evidence type="ECO:0000269" key="4">
    <source>
    </source>
</evidence>
<evidence type="ECO:0000269" key="5">
    <source>
    </source>
</evidence>
<evidence type="ECO:0000303" key="6">
    <source>
    </source>
</evidence>
<evidence type="ECO:0000305" key="7"/>
<evidence type="ECO:0000312" key="8">
    <source>
        <dbReference type="MGI" id="MGI:1917379"/>
    </source>
</evidence>